<name>RL29_ECOSM</name>
<comment type="similarity">
    <text evidence="1">Belongs to the universal ribosomal protein uL29 family.</text>
</comment>
<protein>
    <recommendedName>
        <fullName evidence="1">Large ribosomal subunit protein uL29</fullName>
    </recommendedName>
    <alternativeName>
        <fullName evidence="2">50S ribosomal protein L29</fullName>
    </alternativeName>
</protein>
<sequence>MKAKELREKSVEELNTELLNLLREQFNLRMQAASGQLQQSHLLKQVRRDVARVKTLLNEKAGA</sequence>
<dbReference type="EMBL" id="CP000970">
    <property type="protein sequence ID" value="ACB17416.1"/>
    <property type="molecule type" value="Genomic_DNA"/>
</dbReference>
<dbReference type="RefSeq" id="WP_000644741.1">
    <property type="nucleotide sequence ID" value="NC_010498.1"/>
</dbReference>
<dbReference type="SMR" id="B1LHC6"/>
<dbReference type="GeneID" id="93778675"/>
<dbReference type="KEGG" id="ecm:EcSMS35_3607"/>
<dbReference type="HOGENOM" id="CLU_158491_1_2_6"/>
<dbReference type="Proteomes" id="UP000007011">
    <property type="component" value="Chromosome"/>
</dbReference>
<dbReference type="GO" id="GO:0022625">
    <property type="term" value="C:cytosolic large ribosomal subunit"/>
    <property type="evidence" value="ECO:0007669"/>
    <property type="project" value="TreeGrafter"/>
</dbReference>
<dbReference type="GO" id="GO:0003735">
    <property type="term" value="F:structural constituent of ribosome"/>
    <property type="evidence" value="ECO:0007669"/>
    <property type="project" value="InterPro"/>
</dbReference>
<dbReference type="GO" id="GO:0006412">
    <property type="term" value="P:translation"/>
    <property type="evidence" value="ECO:0007669"/>
    <property type="project" value="UniProtKB-UniRule"/>
</dbReference>
<dbReference type="CDD" id="cd00427">
    <property type="entry name" value="Ribosomal_L29_HIP"/>
    <property type="match status" value="1"/>
</dbReference>
<dbReference type="Gene3D" id="6.10.140.1970">
    <property type="match status" value="1"/>
</dbReference>
<dbReference type="HAMAP" id="MF_00374">
    <property type="entry name" value="Ribosomal_uL29"/>
    <property type="match status" value="1"/>
</dbReference>
<dbReference type="InterPro" id="IPR050063">
    <property type="entry name" value="Ribosomal_protein_uL29"/>
</dbReference>
<dbReference type="InterPro" id="IPR001854">
    <property type="entry name" value="Ribosomal_uL29"/>
</dbReference>
<dbReference type="InterPro" id="IPR018254">
    <property type="entry name" value="Ribosomal_uL29_CS"/>
</dbReference>
<dbReference type="InterPro" id="IPR036049">
    <property type="entry name" value="Ribosomal_uL29_sf"/>
</dbReference>
<dbReference type="NCBIfam" id="TIGR00012">
    <property type="entry name" value="L29"/>
    <property type="match status" value="1"/>
</dbReference>
<dbReference type="PANTHER" id="PTHR10916">
    <property type="entry name" value="60S RIBOSOMAL PROTEIN L35/50S RIBOSOMAL PROTEIN L29"/>
    <property type="match status" value="1"/>
</dbReference>
<dbReference type="PANTHER" id="PTHR10916:SF0">
    <property type="entry name" value="LARGE RIBOSOMAL SUBUNIT PROTEIN UL29C"/>
    <property type="match status" value="1"/>
</dbReference>
<dbReference type="Pfam" id="PF00831">
    <property type="entry name" value="Ribosomal_L29"/>
    <property type="match status" value="1"/>
</dbReference>
<dbReference type="SUPFAM" id="SSF46561">
    <property type="entry name" value="Ribosomal protein L29 (L29p)"/>
    <property type="match status" value="1"/>
</dbReference>
<dbReference type="PROSITE" id="PS00579">
    <property type="entry name" value="RIBOSOMAL_L29"/>
    <property type="match status" value="1"/>
</dbReference>
<organism>
    <name type="scientific">Escherichia coli (strain SMS-3-5 / SECEC)</name>
    <dbReference type="NCBI Taxonomy" id="439855"/>
    <lineage>
        <taxon>Bacteria</taxon>
        <taxon>Pseudomonadati</taxon>
        <taxon>Pseudomonadota</taxon>
        <taxon>Gammaproteobacteria</taxon>
        <taxon>Enterobacterales</taxon>
        <taxon>Enterobacteriaceae</taxon>
        <taxon>Escherichia</taxon>
    </lineage>
</organism>
<keyword id="KW-0687">Ribonucleoprotein</keyword>
<keyword id="KW-0689">Ribosomal protein</keyword>
<proteinExistence type="inferred from homology"/>
<accession>B1LHC6</accession>
<gene>
    <name evidence="1" type="primary">rpmC</name>
    <name type="ordered locus">EcSMS35_3607</name>
</gene>
<feature type="chain" id="PRO_1000121771" description="Large ribosomal subunit protein uL29">
    <location>
        <begin position="1"/>
        <end position="63"/>
    </location>
</feature>
<reference key="1">
    <citation type="journal article" date="2008" name="J. Bacteriol.">
        <title>Insights into the environmental resistance gene pool from the genome sequence of the multidrug-resistant environmental isolate Escherichia coli SMS-3-5.</title>
        <authorList>
            <person name="Fricke W.F."/>
            <person name="Wright M.S."/>
            <person name="Lindell A.H."/>
            <person name="Harkins D.M."/>
            <person name="Baker-Austin C."/>
            <person name="Ravel J."/>
            <person name="Stepanauskas R."/>
        </authorList>
    </citation>
    <scope>NUCLEOTIDE SEQUENCE [LARGE SCALE GENOMIC DNA]</scope>
    <source>
        <strain>SMS-3-5 / SECEC</strain>
    </source>
</reference>
<evidence type="ECO:0000255" key="1">
    <source>
        <dbReference type="HAMAP-Rule" id="MF_00374"/>
    </source>
</evidence>
<evidence type="ECO:0000305" key="2"/>